<feature type="chain" id="PRO_1000048239" description="Cytidylate kinase">
    <location>
        <begin position="1"/>
        <end position="230"/>
    </location>
</feature>
<feature type="binding site" evidence="1">
    <location>
        <begin position="13"/>
        <end position="21"/>
    </location>
    <ligand>
        <name>ATP</name>
        <dbReference type="ChEBI" id="CHEBI:30616"/>
    </ligand>
</feature>
<reference key="1">
    <citation type="journal article" date="2008" name="PLoS ONE">
        <title>Genetic basis of virulence attenuation revealed by comparative genomic analysis of Mycobacterium tuberculosis strain H37Ra versus H37Rv.</title>
        <authorList>
            <person name="Zheng H."/>
            <person name="Lu L."/>
            <person name="Wang B."/>
            <person name="Pu S."/>
            <person name="Zhang X."/>
            <person name="Zhu G."/>
            <person name="Shi W."/>
            <person name="Zhang L."/>
            <person name="Wang H."/>
            <person name="Wang S."/>
            <person name="Zhao G."/>
            <person name="Zhang Y."/>
        </authorList>
    </citation>
    <scope>NUCLEOTIDE SEQUENCE [LARGE SCALE GENOMIC DNA]</scope>
    <source>
        <strain>ATCC 25177 / H37Ra</strain>
    </source>
</reference>
<protein>
    <recommendedName>
        <fullName evidence="1">Cytidylate kinase</fullName>
        <shortName evidence="1">CK</shortName>
        <ecNumber evidence="1">2.7.4.25</ecNumber>
    </recommendedName>
    <alternativeName>
        <fullName evidence="1">Cytidine monophosphate kinase</fullName>
        <shortName evidence="1">CMP kinase</shortName>
    </alternativeName>
</protein>
<comment type="catalytic activity">
    <reaction evidence="1">
        <text>CMP + ATP = CDP + ADP</text>
        <dbReference type="Rhea" id="RHEA:11600"/>
        <dbReference type="ChEBI" id="CHEBI:30616"/>
        <dbReference type="ChEBI" id="CHEBI:58069"/>
        <dbReference type="ChEBI" id="CHEBI:60377"/>
        <dbReference type="ChEBI" id="CHEBI:456216"/>
        <dbReference type="EC" id="2.7.4.25"/>
    </reaction>
</comment>
<comment type="catalytic activity">
    <reaction evidence="1">
        <text>dCMP + ATP = dCDP + ADP</text>
        <dbReference type="Rhea" id="RHEA:25094"/>
        <dbReference type="ChEBI" id="CHEBI:30616"/>
        <dbReference type="ChEBI" id="CHEBI:57566"/>
        <dbReference type="ChEBI" id="CHEBI:58593"/>
        <dbReference type="ChEBI" id="CHEBI:456216"/>
        <dbReference type="EC" id="2.7.4.25"/>
    </reaction>
</comment>
<comment type="subcellular location">
    <subcellularLocation>
        <location evidence="1">Cytoplasm</location>
    </subcellularLocation>
</comment>
<comment type="similarity">
    <text evidence="1">Belongs to the cytidylate kinase family. Type 1 subfamily.</text>
</comment>
<evidence type="ECO:0000255" key="1">
    <source>
        <dbReference type="HAMAP-Rule" id="MF_00238"/>
    </source>
</evidence>
<gene>
    <name evidence="1" type="primary">cmk</name>
    <name type="ordered locus">MRA_1722</name>
</gene>
<dbReference type="EC" id="2.7.4.25" evidence="1"/>
<dbReference type="EMBL" id="CP000611">
    <property type="protein sequence ID" value="ABQ73471.1"/>
    <property type="molecule type" value="Genomic_DNA"/>
</dbReference>
<dbReference type="RefSeq" id="WP_003408441.1">
    <property type="nucleotide sequence ID" value="NZ_CP016972.1"/>
</dbReference>
<dbReference type="SMR" id="A5U371"/>
<dbReference type="GeneID" id="45425683"/>
<dbReference type="KEGG" id="mra:MRA_1722"/>
<dbReference type="eggNOG" id="COG0283">
    <property type="taxonomic scope" value="Bacteria"/>
</dbReference>
<dbReference type="HOGENOM" id="CLU_079959_0_0_11"/>
<dbReference type="Proteomes" id="UP000001988">
    <property type="component" value="Chromosome"/>
</dbReference>
<dbReference type="GO" id="GO:0005829">
    <property type="term" value="C:cytosol"/>
    <property type="evidence" value="ECO:0007669"/>
    <property type="project" value="TreeGrafter"/>
</dbReference>
<dbReference type="GO" id="GO:0005524">
    <property type="term" value="F:ATP binding"/>
    <property type="evidence" value="ECO:0007669"/>
    <property type="project" value="UniProtKB-UniRule"/>
</dbReference>
<dbReference type="GO" id="GO:0036430">
    <property type="term" value="F:CMP kinase activity"/>
    <property type="evidence" value="ECO:0007669"/>
    <property type="project" value="RHEA"/>
</dbReference>
<dbReference type="GO" id="GO:0036431">
    <property type="term" value="F:dCMP kinase activity"/>
    <property type="evidence" value="ECO:0007669"/>
    <property type="project" value="RHEA"/>
</dbReference>
<dbReference type="GO" id="GO:0015949">
    <property type="term" value="P:nucleobase-containing small molecule interconversion"/>
    <property type="evidence" value="ECO:0007669"/>
    <property type="project" value="TreeGrafter"/>
</dbReference>
<dbReference type="GO" id="GO:0006220">
    <property type="term" value="P:pyrimidine nucleotide metabolic process"/>
    <property type="evidence" value="ECO:0007669"/>
    <property type="project" value="UniProtKB-UniRule"/>
</dbReference>
<dbReference type="CDD" id="cd02020">
    <property type="entry name" value="CMPK"/>
    <property type="match status" value="1"/>
</dbReference>
<dbReference type="Gene3D" id="3.40.50.300">
    <property type="entry name" value="P-loop containing nucleotide triphosphate hydrolases"/>
    <property type="match status" value="1"/>
</dbReference>
<dbReference type="HAMAP" id="MF_00238">
    <property type="entry name" value="Cytidyl_kinase_type1"/>
    <property type="match status" value="1"/>
</dbReference>
<dbReference type="InterPro" id="IPR003136">
    <property type="entry name" value="Cytidylate_kin"/>
</dbReference>
<dbReference type="InterPro" id="IPR011994">
    <property type="entry name" value="Cytidylate_kinase_dom"/>
</dbReference>
<dbReference type="InterPro" id="IPR027417">
    <property type="entry name" value="P-loop_NTPase"/>
</dbReference>
<dbReference type="NCBIfam" id="TIGR00017">
    <property type="entry name" value="cmk"/>
    <property type="match status" value="1"/>
</dbReference>
<dbReference type="PANTHER" id="PTHR21299:SF2">
    <property type="entry name" value="CYTIDYLATE KINASE"/>
    <property type="match status" value="1"/>
</dbReference>
<dbReference type="PANTHER" id="PTHR21299">
    <property type="entry name" value="CYTIDYLATE KINASE/PANTOATE-BETA-ALANINE LIGASE"/>
    <property type="match status" value="1"/>
</dbReference>
<dbReference type="Pfam" id="PF02224">
    <property type="entry name" value="Cytidylate_kin"/>
    <property type="match status" value="1"/>
</dbReference>
<dbReference type="SUPFAM" id="SSF52540">
    <property type="entry name" value="P-loop containing nucleoside triphosphate hydrolases"/>
    <property type="match status" value="1"/>
</dbReference>
<organism>
    <name type="scientific">Mycobacterium tuberculosis (strain ATCC 25177 / H37Ra)</name>
    <dbReference type="NCBI Taxonomy" id="419947"/>
    <lineage>
        <taxon>Bacteria</taxon>
        <taxon>Bacillati</taxon>
        <taxon>Actinomycetota</taxon>
        <taxon>Actinomycetes</taxon>
        <taxon>Mycobacteriales</taxon>
        <taxon>Mycobacteriaceae</taxon>
        <taxon>Mycobacterium</taxon>
        <taxon>Mycobacterium tuberculosis complex</taxon>
    </lineage>
</organism>
<sequence length="230" mass="24177">MSRLSAAVVAIDGPAGTGKSSVSRRLARELGARFLDTGAMYRIVTLAVLRAGADPSDIAAVETIASTVQMSLGYDPDGDSCYLAGEDVSVEIRGDAVTRAVSAVSSVPAVRTRLVELQRTMAEGPGSIVVEGRDIGTVVFPDAPVKIFLTASAETRARRRNAQNVAAGLADDYDGVLADVRRRDHLDSTRAVSPLQAAGDAVIVDTSDMTEAEVVAHLLELVTRRSEAVR</sequence>
<name>KCY_MYCTA</name>
<keyword id="KW-0067">ATP-binding</keyword>
<keyword id="KW-0963">Cytoplasm</keyword>
<keyword id="KW-0418">Kinase</keyword>
<keyword id="KW-0547">Nucleotide-binding</keyword>
<keyword id="KW-1185">Reference proteome</keyword>
<keyword id="KW-0808">Transferase</keyword>
<accession>A5U371</accession>
<proteinExistence type="inferred from homology"/>